<keyword id="KW-0301">Gamma-carboxyglutamic acid</keyword>
<keyword id="KW-0325">Glycoprotein</keyword>
<keyword id="KW-0597">Phosphoprotein</keyword>
<keyword id="KW-0646">Protease inhibitor</keyword>
<keyword id="KW-0654">Proteoglycan</keyword>
<keyword id="KW-1185">Reference proteome</keyword>
<keyword id="KW-0964">Secreted</keyword>
<keyword id="KW-0722">Serine protease inhibitor</keyword>
<keyword id="KW-0732">Signal</keyword>
<reference key="1">
    <citation type="submission" date="1997-03" db="EMBL/GenBank/DDBJ databases">
        <authorList>
            <person name="Gebhard W."/>
        </authorList>
    </citation>
    <scope>NUCLEOTIDE SEQUENCE [MRNA]</scope>
    <source>
        <tissue>Liver</tissue>
    </source>
</reference>
<organism>
    <name type="scientific">Sus scrofa</name>
    <name type="common">Pig</name>
    <dbReference type="NCBI Taxonomy" id="9823"/>
    <lineage>
        <taxon>Eukaryota</taxon>
        <taxon>Metazoa</taxon>
        <taxon>Chordata</taxon>
        <taxon>Craniata</taxon>
        <taxon>Vertebrata</taxon>
        <taxon>Euteleostomi</taxon>
        <taxon>Mammalia</taxon>
        <taxon>Eutheria</taxon>
        <taxon>Laurasiatheria</taxon>
        <taxon>Artiodactyla</taxon>
        <taxon>Suina</taxon>
        <taxon>Suidae</taxon>
        <taxon>Sus</taxon>
    </lineage>
</organism>
<name>ITIH2_PIG</name>
<sequence>MKGLTCFLLCFLLSEAQGFEIPTNGLSEFAEYGDLAELALGKFHVVPGNRRSQEGVDQVTLYSYKVQSTITSRMANTVIQTKVVNHSPEPQDVVFDIQIPKGAFISNFSMTVDGTKFTSSIKEKTVGRALYWQARAKGKTAGLVRSRALDMENFKTEVNIAPGAKVQFELHYQEVKWRNLGSYEHRIHLQPGRLAKHLEVDVQIIEPQGLRFLHVLDTFDGHFDGVPVVVKGQQKAHVAFKPTVAQQRKCPSCSETAVDGELVVMYDVNREQKAGELQLFNGYFVHFFAPESMDPIPKNILFVIDVSGSMWGIKMKQTVEAMKTILDDLRAEDQFSLVDFNHNIRTWRNDLVSATKTQVADAKTYIEKIQPSGGTNINEALLRAIFILNEANNLGLLDPNSVSLIILVSDGDPTVGELQLSKIQKNVKQNIQDNVSLFSLGIGFDVDYDFLKRLSNDNRGMAQRIYGNQDTASQLKKFYNQVSTPLLRNVQFNYPQASVTDVTQNSFPNYFGGSEIVVAGKFNPEKLEQLQGIITATSANVELVLETLAEMDGLEAFLAKDRHADPDFTKKLWAYLTINQLLDERSRAPSAAVKKKITKSILQMSLDHHIVTPLTAMVVENEAGDERMLADAPPQDQSCCSGTLNYGRKVTPNSLPSWVNPLPTPRVPLPAVGPSVIEATPPPHVMRVENDPHFIIYLPRSQQNICFNIDSEPGKILNLVSDPESGIVINGQLISAKKLKDGKLSTYFGKIGFYFQHEDVKVEISTETISLSRGSRVSVLSWSDSALVLNQRVHISVKKEKTVTVTLDQEVSFSVLLHRVWKKHPINVDFLGIYIPPTTKFSPKAHGLIGQFMHEPEIRIFNERPGKDPEKPEASMEVKGQTLVVTRGLQKDYRTDRVFGTDVPCWFVHNSGKGFIDGHYKDYLVPLLYSFLKRP</sequence>
<protein>
    <recommendedName>
        <fullName>Inter-alpha-trypsin inhibitor heavy chain H2</fullName>
        <shortName>ITI heavy chain H2</shortName>
        <shortName>ITI-HC2</shortName>
        <shortName>Inter-alpha-inhibitor heavy chain 2</shortName>
    </recommendedName>
</protein>
<comment type="function">
    <text evidence="1">May act as a carrier of hyaluronan in serum or as a binding protein between hyaluronan and other matrix protein, including those on cell surfaces in tissues to regulate the localization, synthesis and degradation of hyaluronan which are essential to cells undergoing biological processes.</text>
</comment>
<comment type="subunit">
    <text evidence="2">I-alpha-I plasma protease inhibitors are assembled from one or two heavy chains (HC) and one light chain, bikunin. Inter-alpha-inhibitor (I-alpha-I) is composed of ITIH1/HC1, ITIH2/HC2 and bikunin.</text>
</comment>
<comment type="subcellular location">
    <subcellularLocation>
        <location evidence="1">Secreted</location>
    </subcellularLocation>
</comment>
<comment type="PTM">
    <text evidence="1">Heavy chains are linked to bikunin via chondroitin 4-sulfate esterified to the alpha-carboxyl of the C-terminal aspartate after propeptide cleavage.</text>
</comment>
<comment type="PTM">
    <text evidence="2">Phosphorylated by FAM20C in the extracellular medium.</text>
</comment>
<comment type="similarity">
    <text evidence="6">Belongs to the ITIH family.</text>
</comment>
<evidence type="ECO:0000250" key="1"/>
<evidence type="ECO:0000250" key="2">
    <source>
        <dbReference type="UniProtKB" id="P19823"/>
    </source>
</evidence>
<evidence type="ECO:0000255" key="3"/>
<evidence type="ECO:0000255" key="4">
    <source>
        <dbReference type="PROSITE-ProRule" id="PRU00219"/>
    </source>
</evidence>
<evidence type="ECO:0000255" key="5">
    <source>
        <dbReference type="PROSITE-ProRule" id="PRU00801"/>
    </source>
</evidence>
<evidence type="ECO:0000305" key="6"/>
<accession>O02668</accession>
<gene>
    <name type="primary">ITIH2</name>
</gene>
<proteinExistence type="evidence at transcript level"/>
<feature type="signal peptide" evidence="3">
    <location>
        <begin position="1"/>
        <end position="18"/>
    </location>
</feature>
<feature type="propeptide" id="PRO_0000016526" evidence="1">
    <location>
        <begin position="19"/>
        <end position="53"/>
    </location>
</feature>
<feature type="chain" id="PRO_0000016527" description="Inter-alpha-trypsin inhibitor heavy chain H2">
    <location>
        <begin position="54"/>
        <end position="691"/>
    </location>
</feature>
<feature type="propeptide" id="PRO_0000016528" evidence="1">
    <location>
        <begin position="692"/>
        <end position="935"/>
    </location>
</feature>
<feature type="domain" description="VIT" evidence="5">
    <location>
        <begin position="45"/>
        <end position="174"/>
    </location>
</feature>
<feature type="domain" description="VWFA" evidence="4">
    <location>
        <begin position="297"/>
        <end position="457"/>
    </location>
</feature>
<feature type="modified residue" description="4-carboxyglutamate" evidence="2">
    <location>
        <position position="271"/>
    </location>
</feature>
<feature type="modified residue" description="Phosphoserine" evidence="2">
    <location>
        <position position="455"/>
    </location>
</feature>
<feature type="modified residue" description="Aspartate 1-(chondroitin 4-sulfate)-ester" evidence="1">
    <location>
        <position position="691"/>
    </location>
</feature>
<feature type="modified residue" description="Phosphoserine" evidence="2">
    <location>
        <position position="875"/>
    </location>
</feature>
<feature type="glycosylation site" description="N-linked (GlcNAc...) asparagine" evidence="3">
    <location>
        <position position="107"/>
    </location>
</feature>
<feature type="glycosylation site" description="N-linked (GlcNAc...) asparagine" evidence="3">
    <location>
        <position position="434"/>
    </location>
</feature>
<dbReference type="EMBL" id="Y11545">
    <property type="protein sequence ID" value="CAA72308.1"/>
    <property type="molecule type" value="mRNA"/>
</dbReference>
<dbReference type="RefSeq" id="NP_999068.1">
    <property type="nucleotide sequence ID" value="NM_213903.1"/>
</dbReference>
<dbReference type="SMR" id="O02668"/>
<dbReference type="FunCoup" id="O02668">
    <property type="interactions" value="410"/>
</dbReference>
<dbReference type="STRING" id="9823.ENSSSCP00000011867"/>
<dbReference type="GlyCosmos" id="O02668">
    <property type="glycosylation" value="2 sites, No reported glycans"/>
</dbReference>
<dbReference type="GlyGen" id="O02668">
    <property type="glycosylation" value="3 sites"/>
</dbReference>
<dbReference type="PaxDb" id="9823-ENSSSCP00000011867"/>
<dbReference type="PeptideAtlas" id="O02668"/>
<dbReference type="Ensembl" id="ENSSSCT00045037844.1">
    <property type="protein sequence ID" value="ENSSSCP00045026301.1"/>
    <property type="gene ID" value="ENSSSCG00045021935.1"/>
</dbReference>
<dbReference type="Ensembl" id="ENSSSCT00105022637">
    <property type="protein sequence ID" value="ENSSSCP00105016347"/>
    <property type="gene ID" value="ENSSSCG00105011259"/>
</dbReference>
<dbReference type="Ensembl" id="ENSSSCT00110040957">
    <property type="protein sequence ID" value="ENSSSCP00110028639"/>
    <property type="gene ID" value="ENSSSCG00110021122"/>
</dbReference>
<dbReference type="GeneID" id="396937"/>
<dbReference type="KEGG" id="ssc:396937"/>
<dbReference type="CTD" id="3698"/>
<dbReference type="eggNOG" id="ENOG502QPS2">
    <property type="taxonomic scope" value="Eukaryota"/>
</dbReference>
<dbReference type="HOGENOM" id="CLU_046425_0_0_1"/>
<dbReference type="InParanoid" id="O02668"/>
<dbReference type="OrthoDB" id="299997at2759"/>
<dbReference type="Reactome" id="R-SSC-381426">
    <property type="pathway name" value="Regulation of Insulin-like Growth Factor (IGF) transport and uptake by Insulin-like Growth Factor Binding Proteins (IGFBPs)"/>
</dbReference>
<dbReference type="Reactome" id="R-SSC-8957275">
    <property type="pathway name" value="Post-translational protein phosphorylation"/>
</dbReference>
<dbReference type="Proteomes" id="UP000008227">
    <property type="component" value="Unplaced"/>
</dbReference>
<dbReference type="Proteomes" id="UP000314985">
    <property type="component" value="Unplaced"/>
</dbReference>
<dbReference type="Proteomes" id="UP000694570">
    <property type="component" value="Unplaced"/>
</dbReference>
<dbReference type="Proteomes" id="UP000694571">
    <property type="component" value="Unplaced"/>
</dbReference>
<dbReference type="Proteomes" id="UP000694720">
    <property type="component" value="Unplaced"/>
</dbReference>
<dbReference type="Proteomes" id="UP000694722">
    <property type="component" value="Unplaced"/>
</dbReference>
<dbReference type="Proteomes" id="UP000694723">
    <property type="component" value="Unplaced"/>
</dbReference>
<dbReference type="Proteomes" id="UP000694724">
    <property type="component" value="Unplaced"/>
</dbReference>
<dbReference type="Proteomes" id="UP000694725">
    <property type="component" value="Unplaced"/>
</dbReference>
<dbReference type="Proteomes" id="UP000694726">
    <property type="component" value="Unplaced"/>
</dbReference>
<dbReference type="Proteomes" id="UP000694727">
    <property type="component" value="Unplaced"/>
</dbReference>
<dbReference type="Proteomes" id="UP000694728">
    <property type="component" value="Unplaced"/>
</dbReference>
<dbReference type="GO" id="GO:0005576">
    <property type="term" value="C:extracellular region"/>
    <property type="evidence" value="ECO:0007669"/>
    <property type="project" value="UniProtKB-SubCell"/>
</dbReference>
<dbReference type="GO" id="GO:0004867">
    <property type="term" value="F:serine-type endopeptidase inhibitor activity"/>
    <property type="evidence" value="ECO:0007669"/>
    <property type="project" value="UniProtKB-KW"/>
</dbReference>
<dbReference type="GO" id="GO:0030212">
    <property type="term" value="P:hyaluronan metabolic process"/>
    <property type="evidence" value="ECO:0007669"/>
    <property type="project" value="InterPro"/>
</dbReference>
<dbReference type="CDD" id="cd01461">
    <property type="entry name" value="vWA_interalpha_trypsin_inhibitor"/>
    <property type="match status" value="1"/>
</dbReference>
<dbReference type="FunFam" id="3.40.50.410:FF:000013">
    <property type="entry name" value="inter-alpha-trypsin inhibitor heavy chain H2"/>
    <property type="match status" value="1"/>
</dbReference>
<dbReference type="Gene3D" id="3.40.50.410">
    <property type="entry name" value="von Willebrand factor, type A domain"/>
    <property type="match status" value="1"/>
</dbReference>
<dbReference type="InterPro" id="IPR010600">
    <property type="entry name" value="ITI_HC_C"/>
</dbReference>
<dbReference type="InterPro" id="IPR050934">
    <property type="entry name" value="ITIH"/>
</dbReference>
<dbReference type="InterPro" id="IPR013694">
    <property type="entry name" value="VIT"/>
</dbReference>
<dbReference type="InterPro" id="IPR002035">
    <property type="entry name" value="VWF_A"/>
</dbReference>
<dbReference type="InterPro" id="IPR036465">
    <property type="entry name" value="vWFA_dom_sf"/>
</dbReference>
<dbReference type="PANTHER" id="PTHR10338">
    <property type="entry name" value="INTER-ALPHA-TRYPSIN INHIBITOR HEAVY CHAIN FAMILY MEMBER"/>
    <property type="match status" value="1"/>
</dbReference>
<dbReference type="PANTHER" id="PTHR10338:SF14">
    <property type="entry name" value="INTER-ALPHA-TRYPSIN INHIBITOR HEAVY CHAIN H2"/>
    <property type="match status" value="1"/>
</dbReference>
<dbReference type="Pfam" id="PF06668">
    <property type="entry name" value="ITI_HC_C"/>
    <property type="match status" value="1"/>
</dbReference>
<dbReference type="Pfam" id="PF08487">
    <property type="entry name" value="VIT"/>
    <property type="match status" value="1"/>
</dbReference>
<dbReference type="Pfam" id="PF00092">
    <property type="entry name" value="VWA"/>
    <property type="match status" value="1"/>
</dbReference>
<dbReference type="SMART" id="SM00609">
    <property type="entry name" value="VIT"/>
    <property type="match status" value="1"/>
</dbReference>
<dbReference type="SMART" id="SM00327">
    <property type="entry name" value="VWA"/>
    <property type="match status" value="1"/>
</dbReference>
<dbReference type="SUPFAM" id="SSF53300">
    <property type="entry name" value="vWA-like"/>
    <property type="match status" value="1"/>
</dbReference>
<dbReference type="PROSITE" id="PS51468">
    <property type="entry name" value="VIT"/>
    <property type="match status" value="1"/>
</dbReference>
<dbReference type="PROSITE" id="PS50234">
    <property type="entry name" value="VWFA"/>
    <property type="match status" value="1"/>
</dbReference>